<feature type="chain" id="PRO_0000448985" description="Flavin-dependent halogenase ascD">
    <location>
        <begin position="1"/>
        <end position="554"/>
    </location>
</feature>
<feature type="binding site" evidence="1">
    <location>
        <position position="15"/>
    </location>
    <ligand>
        <name>FAD</name>
        <dbReference type="ChEBI" id="CHEBI:57692"/>
    </ligand>
</feature>
<feature type="binding site" evidence="1">
    <location>
        <position position="18"/>
    </location>
    <ligand>
        <name>FAD</name>
        <dbReference type="ChEBI" id="CHEBI:57692"/>
    </ligand>
</feature>
<feature type="binding site" evidence="1">
    <location>
        <position position="48"/>
    </location>
    <ligand>
        <name>FAD</name>
        <dbReference type="ChEBI" id="CHEBI:57692"/>
    </ligand>
</feature>
<feature type="binding site" evidence="1">
    <location>
        <position position="331"/>
    </location>
    <ligand>
        <name>chloride</name>
        <dbReference type="ChEBI" id="CHEBI:17996"/>
    </ligand>
</feature>
<feature type="binding site" evidence="1">
    <location>
        <position position="332"/>
    </location>
    <ligand>
        <name>chloride</name>
        <dbReference type="ChEBI" id="CHEBI:17996"/>
    </ligand>
</feature>
<feature type="binding site" evidence="1">
    <location>
        <position position="333"/>
    </location>
    <ligand>
        <name>FAD</name>
        <dbReference type="ChEBI" id="CHEBI:57692"/>
    </ligand>
</feature>
<dbReference type="EC" id="1.14.99.-" evidence="5 6"/>
<dbReference type="EMBL" id="LC406756">
    <property type="protein sequence ID" value="BBF25316.1"/>
    <property type="molecule type" value="Genomic_DNA"/>
</dbReference>
<dbReference type="SMR" id="A0A455R7M0"/>
<dbReference type="UniPathway" id="UPA00213"/>
<dbReference type="GO" id="GO:0071949">
    <property type="term" value="F:FAD binding"/>
    <property type="evidence" value="ECO:0007669"/>
    <property type="project" value="InterPro"/>
</dbReference>
<dbReference type="GO" id="GO:0140907">
    <property type="term" value="F:flavin-dependent halogenase activity"/>
    <property type="evidence" value="ECO:0000314"/>
    <property type="project" value="GO_Central"/>
</dbReference>
<dbReference type="GO" id="GO:0004497">
    <property type="term" value="F:monooxygenase activity"/>
    <property type="evidence" value="ECO:0007669"/>
    <property type="project" value="UniProtKB-KW"/>
</dbReference>
<dbReference type="GO" id="GO:0044550">
    <property type="term" value="P:secondary metabolite biosynthetic process"/>
    <property type="evidence" value="ECO:0000314"/>
    <property type="project" value="GO_Central"/>
</dbReference>
<dbReference type="GO" id="GO:0016114">
    <property type="term" value="P:terpenoid biosynthetic process"/>
    <property type="evidence" value="ECO:0007669"/>
    <property type="project" value="UniProtKB-UniPathway"/>
</dbReference>
<dbReference type="Gene3D" id="3.50.50.60">
    <property type="entry name" value="FAD/NAD(P)-binding domain"/>
    <property type="match status" value="1"/>
</dbReference>
<dbReference type="InterPro" id="IPR002938">
    <property type="entry name" value="FAD-bd"/>
</dbReference>
<dbReference type="InterPro" id="IPR036188">
    <property type="entry name" value="FAD/NAD-bd_sf"/>
</dbReference>
<dbReference type="InterPro" id="IPR050816">
    <property type="entry name" value="Flavin-dep_Halogenase_NPB"/>
</dbReference>
<dbReference type="PANTHER" id="PTHR43747:SF5">
    <property type="entry name" value="FAD-BINDING DOMAIN-CONTAINING PROTEIN"/>
    <property type="match status" value="1"/>
</dbReference>
<dbReference type="PANTHER" id="PTHR43747">
    <property type="entry name" value="FAD-BINDING PROTEIN"/>
    <property type="match status" value="1"/>
</dbReference>
<dbReference type="Pfam" id="PF01494">
    <property type="entry name" value="FAD_binding_3"/>
    <property type="match status" value="1"/>
</dbReference>
<dbReference type="SUPFAM" id="SSF51905">
    <property type="entry name" value="FAD/NAD(P)-binding domain"/>
    <property type="match status" value="1"/>
</dbReference>
<keyword id="KW-0274">FAD</keyword>
<keyword id="KW-0285">Flavoprotein</keyword>
<keyword id="KW-0503">Monooxygenase</keyword>
<keyword id="KW-0560">Oxidoreductase</keyword>
<sequence>MSAIPKKCTVLVIGGGPGGSYAASALAREGIDTVVLEGDKFPRYHIGESMLASMRHLLKFVELDGKFDSYGFVKKPGAAFKLNKNKREGYTDFLAAGGPNNYAWNVVRSEADNLMFQHAGESGAKIFDGVSVKSIQFENPTEVPDGEPNLNPGKPVSATYQIKETKEQGQIDFDYVVDASGRIGILSTKYMKNRRYNQGLKNIANWGYWEGCNKYAPGTPRENSPFFEALQDESGWAWFIPLHNGTVSVGVVMNQKLATQKKQEADLDSTEFYHDTLNKISPNLRELIGDGKFVSNVKTASDYSYSASSYSFPYARIVGDAGCFIDPYFSSGVHLALTSGLSAATTISASIRGQVDEELGSEWHTKKFSDAYTRFLLVVLSAYKQIRHQEEPVLSDFDEDNFDRAFSFFRPIIQGTADAANNKLSQEELNKTLEFCAFAFEPVENDEDRSKAMSAMQEAVDNGTGYHPDLSPEQLKAVKHIQARRAMRTSDTMNIESFGTDAINGFVPNLVRGSLGLRKQEAMSGDMGGANGHVDETNGVTVNGHHQPEGVKAH</sequence>
<proteinExistence type="evidence at protein level"/>
<evidence type="ECO:0000250" key="1">
    <source>
        <dbReference type="UniProtKB" id="P95480"/>
    </source>
</evidence>
<evidence type="ECO:0000269" key="2">
    <source>
    </source>
</evidence>
<evidence type="ECO:0000269" key="3">
    <source>
    </source>
</evidence>
<evidence type="ECO:0000269" key="4">
    <source>
    </source>
</evidence>
<evidence type="ECO:0000269" key="5">
    <source>
    </source>
</evidence>
<evidence type="ECO:0000269" key="6">
    <source>
    </source>
</evidence>
<evidence type="ECO:0000303" key="7">
    <source>
    </source>
</evidence>
<evidence type="ECO:0000305" key="8"/>
<name>ASCD_ACREG</name>
<organism>
    <name type="scientific">Acremonium egyptiacum</name>
    <name type="common">Oospora egyptiaca</name>
    <dbReference type="NCBI Taxonomy" id="749675"/>
    <lineage>
        <taxon>Eukaryota</taxon>
        <taxon>Fungi</taxon>
        <taxon>Dikarya</taxon>
        <taxon>Ascomycota</taxon>
        <taxon>Pezizomycotina</taxon>
        <taxon>Sordariomycetes</taxon>
        <taxon>Hypocreomycetidae</taxon>
        <taxon>Hypocreales</taxon>
        <taxon>Hypocreales incertae sedis</taxon>
        <taxon>Acremonium</taxon>
    </lineage>
</organism>
<protein>
    <recommendedName>
        <fullName evidence="7">Flavin-dependent halogenase ascD</fullName>
        <ecNumber evidence="5 6">1.14.99.-</ecNumber>
    </recommendedName>
    <alternativeName>
        <fullName evidence="7">Ascofuranone/ascochlorin biosynthesis clusters protein D</fullName>
    </alternativeName>
</protein>
<accession>A0A455R7M0</accession>
<comment type="function">
    <text evidence="5 6">Flavin-dependent halogenase; part of the asc-1 gene cluster that mediates the biosynthesis of both ascochlorin and ascofuranone, a strong inhibitor of cyanide-insensitive alternative oxidases and a promising drug candidate against African trypanosomiasis (PubMed:30952781, PubMed:35418536). The first step in the pathway is performed by the non-reducing polyketide synthase ascC that produces orsellinic acid by condensing acetyl-CoA with 3 malonyl-CoA units (PubMed:30952781, PubMed:35418536). Orsellinic acid is then prenylated by the prenyltransferase ascA to yield ilicicolinic acid B (PubMed:30952781, PubMed:35418536). Ilicicolinic acid B is further reduced to ilicicolin B by the reductase ascB (PubMed:30952781, PubMed:35418536). The halogenase ascD then chlorinates ilicicolin B to produce ilicicolin A which is converted to ilicicolin A epoxide by the cytochrome P450 monooxygenase ascE that catalyzes stereoselective epoxidation of the terminal double bond of the prenyl group (PubMed:30952781, PubMed:35418536). Ilicicolin A epoxide is the last common precursor for the biosynthesis of ascofuranone and ascochlorin (PubMed:30952781, PubMed:35418536). The terpene cyclase ascF produces a monocyclic terpene, and the cyclization reaction is proposed to be initiated by protonation of the terminal epoxide of ilicicolin A epoxide to generate a monocyclic tertiarycation, which is followed by a series of hydride and methyl shifts with abstraction of proton, leading to the formation of the (14S,15R,19R)-trimethylcyclohexanone ring structure of ilicicolin C, which is finally reduced to ascochlorin by the dehydrogenase ascG (PubMed:30952781). On the other hand, ilicicolin A epoxide is hydroxylated by the cytochrome P450 monooxygenase ascH, and the resultant product is cyclized by the terpene cyclase ascI to ascofuranol via protonation-initiated epoxide ring opening, which facilitates the 6-endo-tet cyclization to form the tetrahy-drofuran ring (PubMed:30952781, PubMed:35418536). Finally, ascofuranol is oxidized into ascofuranone by ascJ (PubMed:30952781, PubMed:35418536).</text>
</comment>
<comment type="catalytic activity">
    <reaction evidence="5 6">
        <text>ilicicolin B + FADH2 + chloride + O2 = ilicicolin A + FAD + 2 H2O + H(+)</text>
        <dbReference type="Rhea" id="RHEA:63084"/>
        <dbReference type="ChEBI" id="CHEBI:15377"/>
        <dbReference type="ChEBI" id="CHEBI:15378"/>
        <dbReference type="ChEBI" id="CHEBI:15379"/>
        <dbReference type="ChEBI" id="CHEBI:17996"/>
        <dbReference type="ChEBI" id="CHEBI:57692"/>
        <dbReference type="ChEBI" id="CHEBI:58307"/>
        <dbReference type="ChEBI" id="CHEBI:146153"/>
        <dbReference type="ChEBI" id="CHEBI:146154"/>
    </reaction>
    <physiologicalReaction direction="left-to-right" evidence="5 6">
        <dbReference type="Rhea" id="RHEA:63085"/>
    </physiologicalReaction>
</comment>
<comment type="pathway">
    <text evidence="5 6">Secondary metabolite biosynthesis; terpenoid biosynthesis.</text>
</comment>
<comment type="induction">
    <text evidence="5">Expression is induced on AF medium.</text>
</comment>
<comment type="biotechnology">
    <text evidence="2 3 4">Ascofuranone is a specific inhibitor of trypanosome alternative oxidase (TAO), and quickly kills African trypanosomes in vitro and cures infected mice. As an essential factor for trypanosome survival, TAO is a promising drug target due to the absence of alternative oxidases in the mammalian host.</text>
</comment>
<comment type="similarity">
    <text evidence="8">Belongs to the flavin-dependent halogenase family.</text>
</comment>
<gene>
    <name evidence="7" type="primary">ascD</name>
</gene>
<reference key="1">
    <citation type="journal article" date="2019" name="Proc. Natl. Acad. Sci. U.S.A.">
        <title>Complete biosynthetic pathways of ascofuranone and ascochlorin in Acremonium egyptiacum.</title>
        <authorList>
            <person name="Araki Y."/>
            <person name="Awakawa T."/>
            <person name="Matsuzaki M."/>
            <person name="Cho R."/>
            <person name="Matsuda Y."/>
            <person name="Hoshino S."/>
            <person name="Shinohara Y."/>
            <person name="Yamamoto M."/>
            <person name="Kido Y."/>
            <person name="Inaoka D.K."/>
            <person name="Nagamune K."/>
            <person name="Ito K."/>
            <person name="Abe I."/>
            <person name="Kita K."/>
        </authorList>
    </citation>
    <scope>NUCLEOTIDE SEQUENCE [GENOMIC DNA]</scope>
    <scope>FUNCTION</scope>
    <scope>CATALYTIC ACTIVITY</scope>
    <scope>INDUCTION</scope>
    <scope>PATHWAY</scope>
    <source>
        <strain>F-1392</strain>
    </source>
</reference>
<reference key="2">
    <citation type="journal article" date="2002" name="Biochim. Biophys. Acta">
        <title>Trypanosome alternative oxidase as a target of chemotherapy.</title>
        <authorList>
            <person name="Nihei C."/>
            <person name="Fukai Y."/>
            <person name="Kita K."/>
        </authorList>
    </citation>
    <scope>BIOTECHNOLOGY</scope>
</reference>
<reference key="3">
    <citation type="journal article" date="2003" name="Parasitol. Int.">
        <title>The efficacy of ascofuranone in a consecutive treatment on Trypanosoma brucei brucei in mice.</title>
        <authorList>
            <person name="Yabu Y."/>
            <person name="Yoshida A."/>
            <person name="Suzuki T."/>
            <person name="Nihei C."/>
            <person name="Kawai K."/>
            <person name="Minagawa N."/>
            <person name="Hosokawa T."/>
            <person name="Nagai K."/>
            <person name="Kita K."/>
            <person name="Ohta N."/>
        </authorList>
    </citation>
    <scope>BIOTECHNOLOGY</scope>
</reference>
<reference key="4">
    <citation type="journal article" date="2010" name="Parasitol. Int.">
        <title>Trypanosome alternative oxidase, a potential therapeutic target for sleeping sickness, is conserved among Trypanosoma brucei subspecies.</title>
        <authorList>
            <person name="Nakamura K."/>
            <person name="Fujioka S."/>
            <person name="Fukumoto S."/>
            <person name="Inoue N."/>
            <person name="Sakamoto K."/>
            <person name="Hirata H."/>
            <person name="Kido Y."/>
            <person name="Yabu Y."/>
            <person name="Suzuki T."/>
            <person name="Watanabe Y."/>
            <person name="Saimoto H."/>
            <person name="Akiyama H."/>
            <person name="Kita K."/>
        </authorList>
    </citation>
    <scope>BIOTECHNOLOGY</scope>
</reference>
<reference key="5">
    <citation type="journal article" date="2022" name="J. Gen. Appl. Microbiol.">
        <title>Heterologous production of ascofuranone and ilicicolin A in Aspergillus sojae.</title>
        <authorList>
            <person name="Araki Y."/>
            <person name="Shinohara Y."/>
            <person name="Hara S."/>
            <person name="Sato A."/>
            <person name="Sakaue R."/>
            <person name="Gomi K."/>
            <person name="Kita K."/>
            <person name="Ito K."/>
        </authorList>
    </citation>
    <scope>FUNCTION</scope>
    <scope>CATALYTIC ACTIVITY</scope>
    <scope>PATHWAY</scope>
</reference>